<dbReference type="EC" id="2.7.10.1" evidence="20"/>
<dbReference type="EMBL" id="X65138">
    <property type="protein sequence ID" value="CAA46268.1"/>
    <property type="molecule type" value="mRNA"/>
</dbReference>
<dbReference type="EMBL" id="X57241">
    <property type="protein sequence ID" value="CAA40517.1"/>
    <property type="molecule type" value="mRNA"/>
</dbReference>
<dbReference type="EMBL" id="S57168">
    <property type="protein sequence ID" value="AAB25836.1"/>
    <property type="molecule type" value="mRNA"/>
</dbReference>
<dbReference type="EMBL" id="AK147698">
    <property type="protein sequence ID" value="BAE28081.1"/>
    <property type="molecule type" value="mRNA"/>
</dbReference>
<dbReference type="EMBL" id="CH466548">
    <property type="protein sequence ID" value="EDL00429.1"/>
    <property type="molecule type" value="Genomic_DNA"/>
</dbReference>
<dbReference type="EMBL" id="BC052164">
    <property type="protein sequence ID" value="AAH52164.1"/>
    <property type="molecule type" value="mRNA"/>
</dbReference>
<dbReference type="CCDS" id="CCDS35627.1">
    <molecule id="Q03137-1"/>
</dbReference>
<dbReference type="PIR" id="S78059">
    <property type="entry name" value="S78059"/>
</dbReference>
<dbReference type="RefSeq" id="NP_031962.2">
    <molecule id="Q03137-1"/>
    <property type="nucleotide sequence ID" value="NM_007936.3"/>
</dbReference>
<dbReference type="PDB" id="1B0X">
    <property type="method" value="X-ray"/>
    <property type="resolution" value="2.00 A"/>
    <property type="chains" value="A=890-981"/>
</dbReference>
<dbReference type="PDB" id="2HEL">
    <property type="method" value="X-ray"/>
    <property type="resolution" value="2.35 A"/>
    <property type="chains" value="A=591-896"/>
</dbReference>
<dbReference type="PDB" id="2XYU">
    <property type="method" value="X-ray"/>
    <property type="resolution" value="2.12 A"/>
    <property type="chains" value="A=612-896"/>
</dbReference>
<dbReference type="PDB" id="2Y6M">
    <property type="method" value="X-ray"/>
    <property type="resolution" value="1.70 A"/>
    <property type="chains" value="A=606-896"/>
</dbReference>
<dbReference type="PDB" id="2Y6O">
    <property type="method" value="X-ray"/>
    <property type="resolution" value="1.54 A"/>
    <property type="chains" value="A=606-896"/>
</dbReference>
<dbReference type="PDBsum" id="1B0X"/>
<dbReference type="PDBsum" id="2HEL"/>
<dbReference type="PDBsum" id="2XYU"/>
<dbReference type="PDBsum" id="2Y6M"/>
<dbReference type="PDBsum" id="2Y6O"/>
<dbReference type="SMR" id="Q03137"/>
<dbReference type="BioGRID" id="199471">
    <property type="interactions" value="7"/>
</dbReference>
<dbReference type="DIP" id="DIP-1019N"/>
<dbReference type="FunCoup" id="Q03137">
    <property type="interactions" value="896"/>
</dbReference>
<dbReference type="IntAct" id="Q03137">
    <property type="interactions" value="12"/>
</dbReference>
<dbReference type="MINT" id="Q03137"/>
<dbReference type="STRING" id="10090.ENSMUSP00000027451"/>
<dbReference type="BindingDB" id="Q03137"/>
<dbReference type="ChEMBL" id="CHEMBL1293259"/>
<dbReference type="GuidetoPHARMACOLOGY" id="1824"/>
<dbReference type="GlyConnect" id="2295">
    <property type="glycosylation" value="1 N-Linked glycan (1 site)"/>
</dbReference>
<dbReference type="GlyCosmos" id="Q03137">
    <property type="glycosylation" value="3 sites, 1 glycan"/>
</dbReference>
<dbReference type="GlyGen" id="Q03137">
    <property type="glycosylation" value="5 sites, 4 N-linked glycans (4 sites), 1 O-linked glycan (1 site)"/>
</dbReference>
<dbReference type="iPTMnet" id="Q03137"/>
<dbReference type="PhosphoSitePlus" id="Q03137"/>
<dbReference type="SwissPalm" id="Q03137"/>
<dbReference type="PaxDb" id="10090-ENSMUSP00000027451"/>
<dbReference type="PeptideAtlas" id="Q03137"/>
<dbReference type="ProteomicsDB" id="275755">
    <molecule id="Q03137-1"/>
</dbReference>
<dbReference type="ProteomicsDB" id="275756">
    <molecule id="Q03137-2"/>
</dbReference>
<dbReference type="Pumba" id="Q03137"/>
<dbReference type="Antibodypedia" id="34350">
    <property type="antibodies" value="704 antibodies from 38 providers"/>
</dbReference>
<dbReference type="DNASU" id="13838"/>
<dbReference type="Ensembl" id="ENSMUST00000027451.13">
    <molecule id="Q03137-1"/>
    <property type="protein sequence ID" value="ENSMUSP00000027451.7"/>
    <property type="gene ID" value="ENSMUSG00000026235.15"/>
</dbReference>
<dbReference type="Ensembl" id="ENSMUST00000188797.7">
    <molecule id="Q03137-1"/>
    <property type="protein sequence ID" value="ENSMUSP00000140954.2"/>
    <property type="gene ID" value="ENSMUSG00000026235.15"/>
</dbReference>
<dbReference type="Ensembl" id="ENSMUST00000188952.7">
    <molecule id="Q03137-1"/>
    <property type="protein sequence ID" value="ENSMUSP00000139640.2"/>
    <property type="gene ID" value="ENSMUSG00000026235.15"/>
</dbReference>
<dbReference type="GeneID" id="13838"/>
<dbReference type="KEGG" id="mmu:13838"/>
<dbReference type="UCSC" id="uc007bpz.1">
    <molecule id="Q03137-1"/>
    <property type="organism name" value="mouse"/>
</dbReference>
<dbReference type="AGR" id="MGI:98277"/>
<dbReference type="CTD" id="2043"/>
<dbReference type="MGI" id="MGI:98277">
    <property type="gene designation" value="Epha4"/>
</dbReference>
<dbReference type="VEuPathDB" id="HostDB:ENSMUSG00000026235"/>
<dbReference type="eggNOG" id="KOG0196">
    <property type="taxonomic scope" value="Eukaryota"/>
</dbReference>
<dbReference type="GeneTree" id="ENSGT00940000156948"/>
<dbReference type="HOGENOM" id="CLU_000288_141_4_1"/>
<dbReference type="InParanoid" id="Q03137"/>
<dbReference type="OMA" id="YYDKFQS"/>
<dbReference type="OrthoDB" id="4062651at2759"/>
<dbReference type="PhylomeDB" id="Q03137"/>
<dbReference type="TreeFam" id="TF315608"/>
<dbReference type="BRENDA" id="2.7.10.1">
    <property type="organism ID" value="3474"/>
</dbReference>
<dbReference type="Reactome" id="R-MMU-2682334">
    <property type="pathway name" value="EPH-Ephrin signaling"/>
</dbReference>
<dbReference type="Reactome" id="R-MMU-3928663">
    <property type="pathway name" value="EPHA-mediated growth cone collapse"/>
</dbReference>
<dbReference type="Reactome" id="R-MMU-3928665">
    <property type="pathway name" value="EPH-ephrin mediated repulsion of cells"/>
</dbReference>
<dbReference type="BioGRID-ORCS" id="13838">
    <property type="hits" value="1 hit in 80 CRISPR screens"/>
</dbReference>
<dbReference type="CD-CODE" id="CE726F99">
    <property type="entry name" value="Postsynaptic density"/>
</dbReference>
<dbReference type="ChiTaRS" id="Epha4">
    <property type="organism name" value="mouse"/>
</dbReference>
<dbReference type="EvolutionaryTrace" id="Q03137"/>
<dbReference type="PRO" id="PR:Q03137"/>
<dbReference type="Proteomes" id="UP000000589">
    <property type="component" value="Chromosome 1"/>
</dbReference>
<dbReference type="RNAct" id="Q03137">
    <property type="molecule type" value="protein"/>
</dbReference>
<dbReference type="Bgee" id="ENSMUSG00000026235">
    <property type="expression patterns" value="Expressed in rostral migratory stream and 294 other cell types or tissues"/>
</dbReference>
<dbReference type="ExpressionAtlas" id="Q03137">
    <property type="expression patterns" value="baseline and differential"/>
</dbReference>
<dbReference type="GO" id="GO:0005912">
    <property type="term" value="C:adherens junction"/>
    <property type="evidence" value="ECO:0007669"/>
    <property type="project" value="UniProtKB-SubCell"/>
</dbReference>
<dbReference type="GO" id="GO:0030424">
    <property type="term" value="C:axon"/>
    <property type="evidence" value="ECO:0000314"/>
    <property type="project" value="UniProtKB"/>
</dbReference>
<dbReference type="GO" id="GO:0043679">
    <property type="term" value="C:axon terminus"/>
    <property type="evidence" value="ECO:0007669"/>
    <property type="project" value="Ensembl"/>
</dbReference>
<dbReference type="GO" id="GO:0044295">
    <property type="term" value="C:axonal growth cone"/>
    <property type="evidence" value="ECO:0007669"/>
    <property type="project" value="Ensembl"/>
</dbReference>
<dbReference type="GO" id="GO:0009986">
    <property type="term" value="C:cell surface"/>
    <property type="evidence" value="ECO:0007669"/>
    <property type="project" value="Ensembl"/>
</dbReference>
<dbReference type="GO" id="GO:0005737">
    <property type="term" value="C:cytoplasm"/>
    <property type="evidence" value="ECO:0000250"/>
    <property type="project" value="UniProtKB"/>
</dbReference>
<dbReference type="GO" id="GO:0030425">
    <property type="term" value="C:dendrite"/>
    <property type="evidence" value="ECO:0000314"/>
    <property type="project" value="UniProtKB"/>
</dbReference>
<dbReference type="GO" id="GO:0043198">
    <property type="term" value="C:dendritic shaft"/>
    <property type="evidence" value="ECO:0007669"/>
    <property type="project" value="Ensembl"/>
</dbReference>
<dbReference type="GO" id="GO:0043197">
    <property type="term" value="C:dendritic spine"/>
    <property type="evidence" value="ECO:0007669"/>
    <property type="project" value="Ensembl"/>
</dbReference>
<dbReference type="GO" id="GO:0031901">
    <property type="term" value="C:early endosome membrane"/>
    <property type="evidence" value="ECO:0000314"/>
    <property type="project" value="UniProtKB"/>
</dbReference>
<dbReference type="GO" id="GO:0030175">
    <property type="term" value="C:filopodium"/>
    <property type="evidence" value="ECO:0007669"/>
    <property type="project" value="Ensembl"/>
</dbReference>
<dbReference type="GO" id="GO:0098978">
    <property type="term" value="C:glutamatergic synapse"/>
    <property type="evidence" value="ECO:0000314"/>
    <property type="project" value="SynGO"/>
</dbReference>
<dbReference type="GO" id="GO:0005741">
    <property type="term" value="C:mitochondrial outer membrane"/>
    <property type="evidence" value="ECO:0007669"/>
    <property type="project" value="Ensembl"/>
</dbReference>
<dbReference type="GO" id="GO:0031594">
    <property type="term" value="C:neuromuscular junction"/>
    <property type="evidence" value="ECO:0007669"/>
    <property type="project" value="Ensembl"/>
</dbReference>
<dbReference type="GO" id="GO:0043204">
    <property type="term" value="C:perikaryon"/>
    <property type="evidence" value="ECO:0007669"/>
    <property type="project" value="Ensembl"/>
</dbReference>
<dbReference type="GO" id="GO:0005886">
    <property type="term" value="C:plasma membrane"/>
    <property type="evidence" value="ECO:0000314"/>
    <property type="project" value="UniProtKB"/>
</dbReference>
<dbReference type="GO" id="GO:0098839">
    <property type="term" value="C:postsynaptic density membrane"/>
    <property type="evidence" value="ECO:0007669"/>
    <property type="project" value="UniProtKB-SubCell"/>
</dbReference>
<dbReference type="GO" id="GO:0045211">
    <property type="term" value="C:postsynaptic membrane"/>
    <property type="evidence" value="ECO:0000314"/>
    <property type="project" value="SynGO"/>
</dbReference>
<dbReference type="GO" id="GO:0042734">
    <property type="term" value="C:presynaptic membrane"/>
    <property type="evidence" value="ECO:0000314"/>
    <property type="project" value="SynGO"/>
</dbReference>
<dbReference type="GO" id="GO:0098685">
    <property type="term" value="C:Schaffer collateral - CA1 synapse"/>
    <property type="evidence" value="ECO:0000314"/>
    <property type="project" value="SynGO"/>
</dbReference>
<dbReference type="GO" id="GO:0005524">
    <property type="term" value="F:ATP binding"/>
    <property type="evidence" value="ECO:0007669"/>
    <property type="project" value="UniProtKB-KW"/>
</dbReference>
<dbReference type="GO" id="GO:0097161">
    <property type="term" value="F:DH domain binding"/>
    <property type="evidence" value="ECO:0000250"/>
    <property type="project" value="UniProtKB"/>
</dbReference>
<dbReference type="GO" id="GO:0046875">
    <property type="term" value="F:ephrin receptor binding"/>
    <property type="evidence" value="ECO:0007669"/>
    <property type="project" value="Ensembl"/>
</dbReference>
<dbReference type="GO" id="GO:0005004">
    <property type="term" value="F:GPI-linked ephrin receptor activity"/>
    <property type="evidence" value="ECO:0000315"/>
    <property type="project" value="UniProtKB"/>
</dbReference>
<dbReference type="GO" id="GO:0042802">
    <property type="term" value="F:identical protein binding"/>
    <property type="evidence" value="ECO:0000353"/>
    <property type="project" value="IntAct"/>
</dbReference>
<dbReference type="GO" id="GO:0042731">
    <property type="term" value="F:PH domain binding"/>
    <property type="evidence" value="ECO:0007669"/>
    <property type="project" value="Ensembl"/>
</dbReference>
<dbReference type="GO" id="GO:0004672">
    <property type="term" value="F:protein kinase activity"/>
    <property type="evidence" value="ECO:0000250"/>
    <property type="project" value="UniProtKB"/>
</dbReference>
<dbReference type="GO" id="GO:1990782">
    <property type="term" value="F:protein tyrosine kinase binding"/>
    <property type="evidence" value="ECO:0007669"/>
    <property type="project" value="Ensembl"/>
</dbReference>
<dbReference type="GO" id="GO:0004714">
    <property type="term" value="F:transmembrane receptor protein tyrosine kinase activity"/>
    <property type="evidence" value="ECO:0000314"/>
    <property type="project" value="UniProtKB"/>
</dbReference>
<dbReference type="GO" id="GO:0005005">
    <property type="term" value="F:transmembrane-ephrin receptor activity"/>
    <property type="evidence" value="ECO:0000314"/>
    <property type="project" value="UniProtKB"/>
</dbReference>
<dbReference type="GO" id="GO:0034332">
    <property type="term" value="P:adherens junction organization"/>
    <property type="evidence" value="ECO:0000315"/>
    <property type="project" value="ARUK-UCL"/>
</dbReference>
<dbReference type="GO" id="GO:0007628">
    <property type="term" value="P:adult walking behavior"/>
    <property type="evidence" value="ECO:0000315"/>
    <property type="project" value="MGI"/>
</dbReference>
<dbReference type="GO" id="GO:0007411">
    <property type="term" value="P:axon guidance"/>
    <property type="evidence" value="ECO:0000315"/>
    <property type="project" value="MGI"/>
</dbReference>
<dbReference type="GO" id="GO:0007155">
    <property type="term" value="P:cell adhesion"/>
    <property type="evidence" value="ECO:0007669"/>
    <property type="project" value="UniProtKB-KW"/>
</dbReference>
<dbReference type="GO" id="GO:1904646">
    <property type="term" value="P:cellular response to amyloid-beta"/>
    <property type="evidence" value="ECO:0000316"/>
    <property type="project" value="ARUK-UCL"/>
</dbReference>
<dbReference type="GO" id="GO:0090102">
    <property type="term" value="P:cochlea development"/>
    <property type="evidence" value="ECO:0000315"/>
    <property type="project" value="UniProtKB"/>
</dbReference>
<dbReference type="GO" id="GO:0021957">
    <property type="term" value="P:corticospinal tract morphogenesis"/>
    <property type="evidence" value="ECO:0000315"/>
    <property type="project" value="UniProtKB"/>
</dbReference>
<dbReference type="GO" id="GO:0048013">
    <property type="term" value="P:ephrin receptor signaling pathway"/>
    <property type="evidence" value="ECO:0000316"/>
    <property type="project" value="ARUK-UCL"/>
</dbReference>
<dbReference type="GO" id="GO:0097156">
    <property type="term" value="P:fasciculation of motor neuron axon"/>
    <property type="evidence" value="ECO:0000315"/>
    <property type="project" value="UniProtKB"/>
</dbReference>
<dbReference type="GO" id="GO:0097155">
    <property type="term" value="P:fasciculation of sensory neuron axon"/>
    <property type="evidence" value="ECO:0000315"/>
    <property type="project" value="UniProtKB"/>
</dbReference>
<dbReference type="GO" id="GO:0008347">
    <property type="term" value="P:glial cell migration"/>
    <property type="evidence" value="ECO:0007669"/>
    <property type="project" value="Ensembl"/>
</dbReference>
<dbReference type="GO" id="GO:0060384">
    <property type="term" value="P:innervation"/>
    <property type="evidence" value="ECO:0000315"/>
    <property type="project" value="MGI"/>
</dbReference>
<dbReference type="GO" id="GO:0008045">
    <property type="term" value="P:motor neuron axon guidance"/>
    <property type="evidence" value="ECO:0000315"/>
    <property type="project" value="UniProtKB"/>
</dbReference>
<dbReference type="GO" id="GO:0048681">
    <property type="term" value="P:negative regulation of axon regeneration"/>
    <property type="evidence" value="ECO:0000315"/>
    <property type="project" value="UniProtKB"/>
</dbReference>
<dbReference type="GO" id="GO:0007162">
    <property type="term" value="P:negative regulation of cell adhesion"/>
    <property type="evidence" value="ECO:0007669"/>
    <property type="project" value="Ensembl"/>
</dbReference>
<dbReference type="GO" id="GO:0030336">
    <property type="term" value="P:negative regulation of cell migration"/>
    <property type="evidence" value="ECO:0007669"/>
    <property type="project" value="Ensembl"/>
</dbReference>
<dbReference type="GO" id="GO:1900038">
    <property type="term" value="P:negative regulation of cellular response to hypoxia"/>
    <property type="evidence" value="ECO:0007669"/>
    <property type="project" value="Ensembl"/>
</dbReference>
<dbReference type="GO" id="GO:0010719">
    <property type="term" value="P:negative regulation of epithelial to mesenchymal transition"/>
    <property type="evidence" value="ECO:0007669"/>
    <property type="project" value="Ensembl"/>
</dbReference>
<dbReference type="GO" id="GO:0070373">
    <property type="term" value="P:negative regulation of ERK1 and ERK2 cascade"/>
    <property type="evidence" value="ECO:0007669"/>
    <property type="project" value="Ensembl"/>
</dbReference>
<dbReference type="GO" id="GO:1900272">
    <property type="term" value="P:negative regulation of long-term synaptic potentiation"/>
    <property type="evidence" value="ECO:0000316"/>
    <property type="project" value="ARUK-UCL"/>
</dbReference>
<dbReference type="GO" id="GO:0043524">
    <property type="term" value="P:negative regulation of neuron apoptotic process"/>
    <property type="evidence" value="ECO:0000315"/>
    <property type="project" value="MGI"/>
</dbReference>
<dbReference type="GO" id="GO:0010977">
    <property type="term" value="P:negative regulation of neuron projection development"/>
    <property type="evidence" value="ECO:0000314"/>
    <property type="project" value="ARUK-UCL"/>
</dbReference>
<dbReference type="GO" id="GO:1903051">
    <property type="term" value="P:negative regulation of proteolysis involved in protein catabolic process"/>
    <property type="evidence" value="ECO:0007669"/>
    <property type="project" value="Ensembl"/>
</dbReference>
<dbReference type="GO" id="GO:0072178">
    <property type="term" value="P:nephric duct morphogenesis"/>
    <property type="evidence" value="ECO:0000316"/>
    <property type="project" value="MGI"/>
</dbReference>
<dbReference type="GO" id="GO:0106030">
    <property type="term" value="P:neuron projection fasciculation"/>
    <property type="evidence" value="ECO:0000314"/>
    <property type="project" value="ARUK-UCL"/>
</dbReference>
<dbReference type="GO" id="GO:0097485">
    <property type="term" value="P:neuron projection guidance"/>
    <property type="evidence" value="ECO:0000314"/>
    <property type="project" value="ARUK-UCL"/>
</dbReference>
<dbReference type="GO" id="GO:0018108">
    <property type="term" value="P:peptidyl-tyrosine phosphorylation"/>
    <property type="evidence" value="ECO:0000250"/>
    <property type="project" value="UniProtKB"/>
</dbReference>
<dbReference type="GO" id="GO:1902004">
    <property type="term" value="P:positive regulation of amyloid-beta formation"/>
    <property type="evidence" value="ECO:0007669"/>
    <property type="project" value="Ensembl"/>
</dbReference>
<dbReference type="GO" id="GO:0045785">
    <property type="term" value="P:positive regulation of cell adhesion"/>
    <property type="evidence" value="ECO:0007669"/>
    <property type="project" value="Ensembl"/>
</dbReference>
<dbReference type="GO" id="GO:0030335">
    <property type="term" value="P:positive regulation of cell migration"/>
    <property type="evidence" value="ECO:0007669"/>
    <property type="project" value="Ensembl"/>
</dbReference>
<dbReference type="GO" id="GO:0008284">
    <property type="term" value="P:positive regulation of cell population proliferation"/>
    <property type="evidence" value="ECO:0007669"/>
    <property type="project" value="Ensembl"/>
</dbReference>
<dbReference type="GO" id="GO:0050775">
    <property type="term" value="P:positive regulation of dendrite morphogenesis"/>
    <property type="evidence" value="ECO:0007669"/>
    <property type="project" value="Ensembl"/>
</dbReference>
<dbReference type="GO" id="GO:1902533">
    <property type="term" value="P:positive regulation of intracellular signal transduction"/>
    <property type="evidence" value="ECO:0000316"/>
    <property type="project" value="ARUK-UCL"/>
</dbReference>
<dbReference type="GO" id="GO:0046330">
    <property type="term" value="P:positive regulation of JNK cascade"/>
    <property type="evidence" value="ECO:0000314"/>
    <property type="project" value="BHF-UCL"/>
</dbReference>
<dbReference type="GO" id="GO:2001108">
    <property type="term" value="P:positive regulation of Rho guanyl-nucleotide exchange factor activity"/>
    <property type="evidence" value="ECO:0000250"/>
    <property type="project" value="UniProtKB"/>
</dbReference>
<dbReference type="GO" id="GO:0046777">
    <property type="term" value="P:protein autophosphorylation"/>
    <property type="evidence" value="ECO:0000250"/>
    <property type="project" value="UniProtKB"/>
</dbReference>
<dbReference type="GO" id="GO:0050821">
    <property type="term" value="P:protein stabilization"/>
    <property type="evidence" value="ECO:0007669"/>
    <property type="project" value="Ensembl"/>
</dbReference>
<dbReference type="GO" id="GO:0048710">
    <property type="term" value="P:regulation of astrocyte differentiation"/>
    <property type="evidence" value="ECO:0000315"/>
    <property type="project" value="UniProtKB"/>
</dbReference>
<dbReference type="GO" id="GO:0050770">
    <property type="term" value="P:regulation of axonogenesis"/>
    <property type="evidence" value="ECO:0000315"/>
    <property type="project" value="UniProtKB"/>
</dbReference>
<dbReference type="GO" id="GO:0061001">
    <property type="term" value="P:regulation of dendritic spine morphogenesis"/>
    <property type="evidence" value="ECO:0000315"/>
    <property type="project" value="UniProtKB"/>
</dbReference>
<dbReference type="GO" id="GO:0043087">
    <property type="term" value="P:regulation of GTPase activity"/>
    <property type="evidence" value="ECO:0000314"/>
    <property type="project" value="UniProtKB"/>
</dbReference>
<dbReference type="GO" id="GO:1905244">
    <property type="term" value="P:regulation of modification of synaptic structure"/>
    <property type="evidence" value="ECO:0000316"/>
    <property type="project" value="ARUK-UCL"/>
</dbReference>
<dbReference type="GO" id="GO:1905806">
    <property type="term" value="P:regulation of synapse pruning"/>
    <property type="evidence" value="ECO:0007669"/>
    <property type="project" value="Ensembl"/>
</dbReference>
<dbReference type="GO" id="GO:0098883">
    <property type="term" value="P:synapse pruning"/>
    <property type="evidence" value="ECO:0000314"/>
    <property type="project" value="SynGO"/>
</dbReference>
<dbReference type="CDD" id="cd10482">
    <property type="entry name" value="EphR_LBD_A4"/>
    <property type="match status" value="1"/>
</dbReference>
<dbReference type="CDD" id="cd00063">
    <property type="entry name" value="FN3"/>
    <property type="match status" value="2"/>
</dbReference>
<dbReference type="CDD" id="cd05066">
    <property type="entry name" value="PTKc_EphR_A"/>
    <property type="match status" value="1"/>
</dbReference>
<dbReference type="CDD" id="cd09545">
    <property type="entry name" value="SAM_EPH-A4"/>
    <property type="match status" value="1"/>
</dbReference>
<dbReference type="FunFam" id="2.60.40.10:FF:000041">
    <property type="entry name" value="ephrin type-A receptor 3"/>
    <property type="match status" value="1"/>
</dbReference>
<dbReference type="FunFam" id="1.10.150.50:FF:000001">
    <property type="entry name" value="Ephrin type-A receptor 5"/>
    <property type="match status" value="1"/>
</dbReference>
<dbReference type="FunFam" id="1.10.510.10:FF:000019">
    <property type="entry name" value="Ephrin type-A receptor 5"/>
    <property type="match status" value="1"/>
</dbReference>
<dbReference type="FunFam" id="2.10.50.10:FF:000001">
    <property type="entry name" value="Ephrin type-A receptor 5"/>
    <property type="match status" value="1"/>
</dbReference>
<dbReference type="FunFam" id="2.60.40.10:FF:000045">
    <property type="entry name" value="Ephrin type-A receptor 5"/>
    <property type="match status" value="1"/>
</dbReference>
<dbReference type="FunFam" id="2.60.40.1770:FF:000001">
    <property type="entry name" value="Ephrin type-A receptor 5"/>
    <property type="match status" value="1"/>
</dbReference>
<dbReference type="FunFam" id="3.30.200.20:FF:000001">
    <property type="entry name" value="Ephrin type-A receptor 5"/>
    <property type="match status" value="1"/>
</dbReference>
<dbReference type="FunFam" id="2.60.120.260:FF:000001">
    <property type="entry name" value="Ephrin type-A receptor 7"/>
    <property type="match status" value="1"/>
</dbReference>
<dbReference type="Gene3D" id="2.60.40.1770">
    <property type="entry name" value="ephrin a2 ectodomain"/>
    <property type="match status" value="1"/>
</dbReference>
<dbReference type="Gene3D" id="2.60.120.260">
    <property type="entry name" value="Galactose-binding domain-like"/>
    <property type="match status" value="1"/>
</dbReference>
<dbReference type="Gene3D" id="2.60.40.10">
    <property type="entry name" value="Immunoglobulins"/>
    <property type="match status" value="2"/>
</dbReference>
<dbReference type="Gene3D" id="3.30.200.20">
    <property type="entry name" value="Phosphorylase Kinase, domain 1"/>
    <property type="match status" value="1"/>
</dbReference>
<dbReference type="Gene3D" id="1.10.150.50">
    <property type="entry name" value="Transcription Factor, Ets-1"/>
    <property type="match status" value="1"/>
</dbReference>
<dbReference type="Gene3D" id="1.10.510.10">
    <property type="entry name" value="Transferase(Phosphotransferase) domain 1"/>
    <property type="match status" value="1"/>
</dbReference>
<dbReference type="Gene3D" id="2.10.50.10">
    <property type="entry name" value="Tumor Necrosis Factor Receptor, subunit A, domain 2"/>
    <property type="match status" value="1"/>
</dbReference>
<dbReference type="InterPro" id="IPR027936">
    <property type="entry name" value="Eph_TM"/>
</dbReference>
<dbReference type="InterPro" id="IPR034270">
    <property type="entry name" value="EphA4_rcpt_lig-bd"/>
</dbReference>
<dbReference type="InterPro" id="IPR030602">
    <property type="entry name" value="EphA4_SAM"/>
</dbReference>
<dbReference type="InterPro" id="IPR001090">
    <property type="entry name" value="Ephrin_rcpt_lig-bd_dom"/>
</dbReference>
<dbReference type="InterPro" id="IPR050449">
    <property type="entry name" value="Ephrin_rcpt_TKs"/>
</dbReference>
<dbReference type="InterPro" id="IPR003961">
    <property type="entry name" value="FN3_dom"/>
</dbReference>
<dbReference type="InterPro" id="IPR036116">
    <property type="entry name" value="FN3_sf"/>
</dbReference>
<dbReference type="InterPro" id="IPR008979">
    <property type="entry name" value="Galactose-bd-like_sf"/>
</dbReference>
<dbReference type="InterPro" id="IPR013783">
    <property type="entry name" value="Ig-like_fold"/>
</dbReference>
<dbReference type="InterPro" id="IPR011009">
    <property type="entry name" value="Kinase-like_dom_sf"/>
</dbReference>
<dbReference type="InterPro" id="IPR000719">
    <property type="entry name" value="Prot_kinase_dom"/>
</dbReference>
<dbReference type="InterPro" id="IPR017441">
    <property type="entry name" value="Protein_kinase_ATP_BS"/>
</dbReference>
<dbReference type="InterPro" id="IPR001660">
    <property type="entry name" value="SAM"/>
</dbReference>
<dbReference type="InterPro" id="IPR013761">
    <property type="entry name" value="SAM/pointed_sf"/>
</dbReference>
<dbReference type="InterPro" id="IPR001245">
    <property type="entry name" value="Ser-Thr/Tyr_kinase_cat_dom"/>
</dbReference>
<dbReference type="InterPro" id="IPR011641">
    <property type="entry name" value="Tyr-kin_ephrin_A/B_rcpt-like"/>
</dbReference>
<dbReference type="InterPro" id="IPR008266">
    <property type="entry name" value="Tyr_kinase_AS"/>
</dbReference>
<dbReference type="InterPro" id="IPR020635">
    <property type="entry name" value="Tyr_kinase_cat_dom"/>
</dbReference>
<dbReference type="InterPro" id="IPR016257">
    <property type="entry name" value="Tyr_kinase_ephrin_rcpt"/>
</dbReference>
<dbReference type="InterPro" id="IPR001426">
    <property type="entry name" value="Tyr_kinase_rcpt_V_CS"/>
</dbReference>
<dbReference type="PANTHER" id="PTHR46877">
    <property type="entry name" value="EPH RECEPTOR A5"/>
    <property type="match status" value="1"/>
</dbReference>
<dbReference type="PANTHER" id="PTHR46877:SF18">
    <property type="entry name" value="EPHRIN TYPE-A RECEPTOR 4"/>
    <property type="match status" value="1"/>
</dbReference>
<dbReference type="Pfam" id="PF14575">
    <property type="entry name" value="EphA2_TM"/>
    <property type="match status" value="1"/>
</dbReference>
<dbReference type="Pfam" id="PF01404">
    <property type="entry name" value="Ephrin_lbd"/>
    <property type="match status" value="1"/>
</dbReference>
<dbReference type="Pfam" id="PF07699">
    <property type="entry name" value="Ephrin_rec_like"/>
    <property type="match status" value="1"/>
</dbReference>
<dbReference type="Pfam" id="PF00041">
    <property type="entry name" value="fn3"/>
    <property type="match status" value="2"/>
</dbReference>
<dbReference type="Pfam" id="PF07714">
    <property type="entry name" value="PK_Tyr_Ser-Thr"/>
    <property type="match status" value="1"/>
</dbReference>
<dbReference type="Pfam" id="PF07647">
    <property type="entry name" value="SAM_2"/>
    <property type="match status" value="1"/>
</dbReference>
<dbReference type="PIRSF" id="PIRSF000666">
    <property type="entry name" value="TyrPK_ephrin_receptor"/>
    <property type="match status" value="1"/>
</dbReference>
<dbReference type="PRINTS" id="PR00014">
    <property type="entry name" value="FNTYPEIII"/>
</dbReference>
<dbReference type="PRINTS" id="PR00109">
    <property type="entry name" value="TYRKINASE"/>
</dbReference>
<dbReference type="SMART" id="SM00615">
    <property type="entry name" value="EPH_lbd"/>
    <property type="match status" value="1"/>
</dbReference>
<dbReference type="SMART" id="SM01411">
    <property type="entry name" value="Ephrin_rec_like"/>
    <property type="match status" value="1"/>
</dbReference>
<dbReference type="SMART" id="SM00060">
    <property type="entry name" value="FN3"/>
    <property type="match status" value="2"/>
</dbReference>
<dbReference type="SMART" id="SM00220">
    <property type="entry name" value="S_TKc"/>
    <property type="match status" value="1"/>
</dbReference>
<dbReference type="SMART" id="SM00454">
    <property type="entry name" value="SAM"/>
    <property type="match status" value="1"/>
</dbReference>
<dbReference type="SMART" id="SM00219">
    <property type="entry name" value="TyrKc"/>
    <property type="match status" value="1"/>
</dbReference>
<dbReference type="SUPFAM" id="SSF49265">
    <property type="entry name" value="Fibronectin type III"/>
    <property type="match status" value="1"/>
</dbReference>
<dbReference type="SUPFAM" id="SSF49785">
    <property type="entry name" value="Galactose-binding domain-like"/>
    <property type="match status" value="1"/>
</dbReference>
<dbReference type="SUPFAM" id="SSF56112">
    <property type="entry name" value="Protein kinase-like (PK-like)"/>
    <property type="match status" value="1"/>
</dbReference>
<dbReference type="SUPFAM" id="SSF47769">
    <property type="entry name" value="SAM/Pointed domain"/>
    <property type="match status" value="1"/>
</dbReference>
<dbReference type="PROSITE" id="PS51550">
    <property type="entry name" value="EPH_LBD"/>
    <property type="match status" value="1"/>
</dbReference>
<dbReference type="PROSITE" id="PS50853">
    <property type="entry name" value="FN3"/>
    <property type="match status" value="2"/>
</dbReference>
<dbReference type="PROSITE" id="PS00107">
    <property type="entry name" value="PROTEIN_KINASE_ATP"/>
    <property type="match status" value="1"/>
</dbReference>
<dbReference type="PROSITE" id="PS50011">
    <property type="entry name" value="PROTEIN_KINASE_DOM"/>
    <property type="match status" value="1"/>
</dbReference>
<dbReference type="PROSITE" id="PS00109">
    <property type="entry name" value="PROTEIN_KINASE_TYR"/>
    <property type="match status" value="1"/>
</dbReference>
<dbReference type="PROSITE" id="PS00790">
    <property type="entry name" value="RECEPTOR_TYR_KIN_V_1"/>
    <property type="match status" value="1"/>
</dbReference>
<dbReference type="PROSITE" id="PS00791">
    <property type="entry name" value="RECEPTOR_TYR_KIN_V_2"/>
    <property type="match status" value="1"/>
</dbReference>
<dbReference type="PROSITE" id="PS50105">
    <property type="entry name" value="SAM_DOMAIN"/>
    <property type="match status" value="1"/>
</dbReference>
<comment type="function">
    <text evidence="10 11 12 13 14 15 16 17 19 20 22">Receptor tyrosine kinase which binds membrane-bound ephrin family ligands residing on adjacent cells, leading to contact-dependent bidirectional signaling into neighboring cells. The signaling pathway downstream of the receptor is referred to as forward signaling while the signaling pathway downstream of the ephrin ligand is referred to as reverse signaling. Highly promiscuous, it has the unique property among Eph receptors to bind and to be physiologically activated by both GPI-anchored ephrin-A and transmembrane ephrin-B ligands including EFNA1 and EFNB3. Upon activation by ephrin ligands, modulates cell morphology and integrin-dependent cell adhesion through regulation of the Rac, Rap and Rho GTPases activity (PubMed:17719550). Plays an important role in the development of the nervous system controlling different steps of axonal guidance including the establishment of the corticospinal projections (PubMed:17719550, PubMed:17785183, PubMed:9789074). May also control the segregation of motor and sensory axons during neuromuscular circuit developmen (PubMed:18403711). In addition to its role in axonal guidance plays a role in synaptic plasticity. Activated by EFNA1 phosphorylates CDK5 at 'Tyr-15' which in turn phosphorylates NGEF regulating RHOA and dendritic spine morphogenesis (PubMed:17143272). In the nervous system, also plays a role in repair after injury preventing axonal regeneration and in angiogenesis playing a role in central nervous system vascular formation (PubMed:15537875, PubMed:16802330). Additionally, its promiscuity makes it available to participate in a variety of cell-cell signaling regulating for instance the development of the thymic epithelium (PubMed:16818734). During development of the cochlear organ of Corti, regulates pillar cell separation by forming a ternary complex with ADAM10 and CADH1 which facilitates the cleavage of CADH1 by ADAM10 and disruption of adherens junctions (PubMed:30639848). Phosphorylates CAPRIN1, promoting CAPRIN1-dependent formation of a membraneless compartment (PubMed:31439799).</text>
</comment>
<comment type="catalytic activity">
    <reaction evidence="7 20">
        <text>L-tyrosyl-[protein] + ATP = O-phospho-L-tyrosyl-[protein] + ADP + H(+)</text>
        <dbReference type="Rhea" id="RHEA:10596"/>
        <dbReference type="Rhea" id="RHEA-COMP:10136"/>
        <dbReference type="Rhea" id="RHEA-COMP:20101"/>
        <dbReference type="ChEBI" id="CHEBI:15378"/>
        <dbReference type="ChEBI" id="CHEBI:30616"/>
        <dbReference type="ChEBI" id="CHEBI:46858"/>
        <dbReference type="ChEBI" id="CHEBI:61978"/>
        <dbReference type="ChEBI" id="CHEBI:456216"/>
        <dbReference type="EC" id="2.7.10.1"/>
    </reaction>
</comment>
<comment type="subunit">
    <text evidence="8 13 14 15 16 19 21">Heterotetramer upon binding of the ligand. The heterotetramer is composed of an ephrin dimer and a receptor dimer. Oligomerization is probably required to induce biological responses. Interacts (phosphorylated at position Tyr-602) with FYN. Interacts (via PDZ motif) with SIPA1L1 (via PDZ domain); controls neuronal morphology through regulation of the RAP1 (RAP1A or RAP1B) and RAP2 (RAP2A, RAP2B or RAP2C) GTPases. Interacts with CDK5, CDK5R1 and NGEF; upon activation by EFNA1 induces NGEF phosphorylation by the kinase CDK5. Interacts with CHN1; effector of EPHA4 in axon guidance linking EPHA4 activation to RAC1 regulation. Forms a ternary complex composed of ADAM10, CADH1 and EPHA4; within the complex, CADH1 is cleaved by ADAM10 which disrupts adherens junctions (PubMed:30639848).</text>
</comment>
<comment type="interaction">
    <interactant intactId="EBI-1539152">
        <id>Q03137</id>
    </interactant>
    <interactant intactId="EBI-1539203">
        <id>Q91V57-1</id>
        <label>Chn1</label>
    </interactant>
    <organismsDiffer>false</organismsDiffer>
    <experiments>2</experiments>
</comment>
<comment type="interaction">
    <interactant intactId="EBI-1539152">
        <id>Q03137</id>
    </interactant>
    <interactant intactId="EBI-1032676">
        <id>P52800</id>
        <label>Efnb2</label>
    </interactant>
    <organismsDiffer>false</organismsDiffer>
    <experiments>2</experiments>
</comment>
<comment type="interaction">
    <interactant intactId="EBI-1539152">
        <id>Q03137</id>
    </interactant>
    <interactant intactId="EBI-529701">
        <id>Q03145</id>
        <label>Epha2</label>
    </interactant>
    <organismsDiffer>false</organismsDiffer>
    <experiments>3</experiments>
</comment>
<comment type="interaction">
    <interactant intactId="EBI-1539152">
        <id>Q03137</id>
    </interactant>
    <interactant intactId="EBI-1539152">
        <id>Q03137</id>
        <label>Epha4</label>
    </interactant>
    <organismsDiffer>false</organismsDiffer>
    <experiments>2</experiments>
</comment>
<comment type="interaction">
    <interactant intactId="EBI-1539152">
        <id>Q03137</id>
    </interactant>
    <interactant intactId="EBI-537711">
        <id>P54763</id>
        <label>Ephb2</label>
    </interactant>
    <organismsDiffer>false</organismsDiffer>
    <experiments>3</experiments>
</comment>
<comment type="interaction">
    <interactant intactId="EBI-1539152">
        <id>Q03137</id>
    </interactant>
    <interactant intactId="EBI-15724937">
        <id>Q921Q7</id>
        <label>Rin1</label>
    </interactant>
    <organismsDiffer>false</organismsDiffer>
    <experiments>2</experiments>
</comment>
<comment type="interaction">
    <interactant intactId="EBI-1539152">
        <id>Q03137</id>
    </interactant>
    <interactant intactId="EBI-1188298">
        <id>O95292</id>
        <label>VAPB</label>
    </interactant>
    <organismsDiffer>true</organismsDiffer>
    <experiments>2</experiments>
</comment>
<comment type="subcellular location">
    <subcellularLocation>
        <location evidence="13">Cell membrane</location>
        <topology evidence="13">Single-pass type I membrane protein</topology>
    </subcellularLocation>
    <subcellularLocation>
        <location evidence="13">Cell projection</location>
        <location evidence="13">Axon</location>
    </subcellularLocation>
    <subcellularLocation>
        <location evidence="13">Cell projection</location>
        <location evidence="13">Dendrite</location>
    </subcellularLocation>
    <subcellularLocation>
        <location evidence="1">Postsynaptic density membrane</location>
    </subcellularLocation>
    <subcellularLocation>
        <location evidence="13">Early endosome</location>
    </subcellularLocation>
    <subcellularLocation>
        <location evidence="19">Cell junction</location>
        <location evidence="19">Adherens junction</location>
    </subcellularLocation>
    <text evidence="13">Clustered upon activation and targeted to early endosome.</text>
</comment>
<comment type="alternative products">
    <event type="alternative splicing"/>
    <isoform>
        <id>Q03137-1</id>
        <name>Long</name>
        <sequence type="displayed"/>
    </isoform>
    <isoform>
        <id>Q03137-2</id>
        <name>Short</name>
        <sequence type="described" ref="VSP_002998"/>
    </isoform>
</comment>
<comment type="tissue specificity">
    <text evidence="18 19">Expressed in inner and outer pillar cells of the organ of Corti (at protein level) (PubMed:30639848). Highest expression in the adult brain and retina and also detectable in kidney, lung, skeletal muscle and thymus. Not detected in heart and liver. Expressed in myogenic progenitor cells (PubMed:27446912).</text>
</comment>
<comment type="developmental stage">
    <text evidence="9 18">Found in both the 10-day embryonic brain and body tissues. In the embryonic brain, expressed in the developing cortex of the telencephalon and major cortical tracts. Also expressed in the hippocampus, fornix and striatal cells and tracts. In the diencephalon, strongly expressed in thalamus, hypothalamus and thalamo-cortical projection. Also expressed in red nuclei of the mesencephalon and in the cerebellum. In the spinal cord, persistent expression occurs in the dorsal funiculus and ventral gray matter. In myogenic progenitor cells, highly expressed at 11.5 dpc and ceases its expression at the late fetal stage (17.5 dpc) (PubMed:27446912).</text>
</comment>
<comment type="domain">
    <text>The protein kinase domain mediates interaction with NGEF.</text>
</comment>
<comment type="disruption phenotype">
    <text evidence="10 12 22">Mice are viable and fertile but display a loss of coordination of limb movement associated with disruptions of cortico-spinal tract. They also display altered development of the thymic epithelium which leads to a defective T-cells development.</text>
</comment>
<comment type="similarity">
    <text evidence="3">Belongs to the protein kinase superfamily. Tyr protein kinase family. Ephrin receptor subfamily.</text>
</comment>
<sequence length="986" mass="109814">MAGIFYFILFSFLFGICDAVTGSRVYPANEVTLLDSRSVQGELGWIASPLEGGWEEVSIMDEKNTPIRTYQVCNVMEASQNNWLRTDWITREGAQRVYIEIKFTLRDCNSLPGVMGTCKETFNLYYYESDNDKERFIRESQFGKIDTIAADESFTQVDIGDRIMKLNTEIRDVGPLSKKGFYLAFQDVGACIALVSVRVFYKKCPLTVRNLAQFPDTITGADTSSLVEVRGSCVNNSEEKDVPKMYCGADGEWLVPIGNCLCNAGHEEQNGECQACKIGYYKALSTDASCAKCPPHSYSVWEGATSCTCDRGFFRADNDAASMPCTRPPSAPLNLISNVNETSVNLEWSSPQNTGGRQDISYNVVCKKCGAGDPSKCRPCGSGVHYTPQQNGLKTTRVSITDLLAHTNYTFEIWAVNGVSKYNPSPDQSVSVTVTTNQAAPSSIALVQAKEVTRYSVALAWLEPDRPNGVILEYEVKYYEKDQNERSYRIVRTAARNTDIKGLNPLTSYVFHVRARTAAGYGDFSEPLEVTTNTVPSRIIGDGANSTVLLVSVSGSVVLVVILIAAFVISRRRSKYSKAKQEADEEKHLNQGVRTYVDPFTYEDPNQAVREFAKEIDASCIKIEKVIGVGEFGEVCSGRLKVPGKREICVAIKTLKAGYTDKQRRDFLSEASIMGQFDHPNIIHLEGVVTKCKPVMIITEYMENGSLDAFLRKNDGRFTVIQLVGMLRGIGSGMKYLSDMSYVHRDLAARNILVNSNLVCKVSDFGMSRVLEDDPEAAYTTRGGKIPIRWTAPEAIAYRKFTSASDVWSYGIVMWEVMSYGERPYWDMSNQDVIKAIEEGYRLPPPMDCPIALHQLMLDCWQKERSDRPKFGQIVNMLDKLIRNPNSLKRTGSESSRPNTALLDPSSPEFSAVVSVGDWLQAIKMDRYKDNFTAAGYTTLEAVVHMSQDDLARIGITAITHQNKILSSVQAMRTQMQQMHGRMVPV</sequence>
<proteinExistence type="evidence at protein level"/>
<reference key="1">
    <citation type="journal article" date="1992" name="Oncogene">
        <title>An Eph-related receptor protein tyrosine kinase gene segmentally expressed in the developing mouse hindbrain.</title>
        <authorList>
            <person name="Gilardi-Hebenstreit P."/>
            <person name="Nieto M.A."/>
            <person name="Frain M."/>
            <person name="Mattei M.-G."/>
            <person name="Chestier A."/>
            <person name="Wilkinson D.G."/>
            <person name="Charnay P."/>
        </authorList>
    </citation>
    <scope>NUCLEOTIDE SEQUENCE [MRNA] (ISOFORM LONG)</scope>
    <source>
        <strain>C57BL/6J</strain>
        <tissue>Embryonic brain</tissue>
    </source>
</reference>
<reference key="2">
    <citation type="journal article" date="1993" name="Oncogene">
        <authorList>
            <person name="Gilardi-Hebenstreit P."/>
            <person name="Nieto M.A."/>
            <person name="Frain M."/>
            <person name="Mattei M.-G."/>
            <person name="Chestier A."/>
            <person name="Wilkinson D.G."/>
            <person name="Charnay P."/>
        </authorList>
    </citation>
    <scope>ERRATUM OF PUBMED:1281307</scope>
</reference>
<reference key="3">
    <citation type="journal article" date="2005" name="Science">
        <title>The transcriptional landscape of the mammalian genome.</title>
        <authorList>
            <person name="Carninci P."/>
            <person name="Kasukawa T."/>
            <person name="Katayama S."/>
            <person name="Gough J."/>
            <person name="Frith M.C."/>
            <person name="Maeda N."/>
            <person name="Oyama R."/>
            <person name="Ravasi T."/>
            <person name="Lenhard B."/>
            <person name="Wells C."/>
            <person name="Kodzius R."/>
            <person name="Shimokawa K."/>
            <person name="Bajic V.B."/>
            <person name="Brenner S.E."/>
            <person name="Batalov S."/>
            <person name="Forrest A.R."/>
            <person name="Zavolan M."/>
            <person name="Davis M.J."/>
            <person name="Wilming L.G."/>
            <person name="Aidinis V."/>
            <person name="Allen J.E."/>
            <person name="Ambesi-Impiombato A."/>
            <person name="Apweiler R."/>
            <person name="Aturaliya R.N."/>
            <person name="Bailey T.L."/>
            <person name="Bansal M."/>
            <person name="Baxter L."/>
            <person name="Beisel K.W."/>
            <person name="Bersano T."/>
            <person name="Bono H."/>
            <person name="Chalk A.M."/>
            <person name="Chiu K.P."/>
            <person name="Choudhary V."/>
            <person name="Christoffels A."/>
            <person name="Clutterbuck D.R."/>
            <person name="Crowe M.L."/>
            <person name="Dalla E."/>
            <person name="Dalrymple B.P."/>
            <person name="de Bono B."/>
            <person name="Della Gatta G."/>
            <person name="di Bernardo D."/>
            <person name="Down T."/>
            <person name="Engstrom P."/>
            <person name="Fagiolini M."/>
            <person name="Faulkner G."/>
            <person name="Fletcher C.F."/>
            <person name="Fukushima T."/>
            <person name="Furuno M."/>
            <person name="Futaki S."/>
            <person name="Gariboldi M."/>
            <person name="Georgii-Hemming P."/>
            <person name="Gingeras T.R."/>
            <person name="Gojobori T."/>
            <person name="Green R.E."/>
            <person name="Gustincich S."/>
            <person name="Harbers M."/>
            <person name="Hayashi Y."/>
            <person name="Hensch T.K."/>
            <person name="Hirokawa N."/>
            <person name="Hill D."/>
            <person name="Huminiecki L."/>
            <person name="Iacono M."/>
            <person name="Ikeo K."/>
            <person name="Iwama A."/>
            <person name="Ishikawa T."/>
            <person name="Jakt M."/>
            <person name="Kanapin A."/>
            <person name="Katoh M."/>
            <person name="Kawasawa Y."/>
            <person name="Kelso J."/>
            <person name="Kitamura H."/>
            <person name="Kitano H."/>
            <person name="Kollias G."/>
            <person name="Krishnan S.P."/>
            <person name="Kruger A."/>
            <person name="Kummerfeld S.K."/>
            <person name="Kurochkin I.V."/>
            <person name="Lareau L.F."/>
            <person name="Lazarevic D."/>
            <person name="Lipovich L."/>
            <person name="Liu J."/>
            <person name="Liuni S."/>
            <person name="McWilliam S."/>
            <person name="Madan Babu M."/>
            <person name="Madera M."/>
            <person name="Marchionni L."/>
            <person name="Matsuda H."/>
            <person name="Matsuzawa S."/>
            <person name="Miki H."/>
            <person name="Mignone F."/>
            <person name="Miyake S."/>
            <person name="Morris K."/>
            <person name="Mottagui-Tabar S."/>
            <person name="Mulder N."/>
            <person name="Nakano N."/>
            <person name="Nakauchi H."/>
            <person name="Ng P."/>
            <person name="Nilsson R."/>
            <person name="Nishiguchi S."/>
            <person name="Nishikawa S."/>
            <person name="Nori F."/>
            <person name="Ohara O."/>
            <person name="Okazaki Y."/>
            <person name="Orlando V."/>
            <person name="Pang K.C."/>
            <person name="Pavan W.J."/>
            <person name="Pavesi G."/>
            <person name="Pesole G."/>
            <person name="Petrovsky N."/>
            <person name="Piazza S."/>
            <person name="Reed J."/>
            <person name="Reid J.F."/>
            <person name="Ring B.Z."/>
            <person name="Ringwald M."/>
            <person name="Rost B."/>
            <person name="Ruan Y."/>
            <person name="Salzberg S.L."/>
            <person name="Sandelin A."/>
            <person name="Schneider C."/>
            <person name="Schoenbach C."/>
            <person name="Sekiguchi K."/>
            <person name="Semple C.A."/>
            <person name="Seno S."/>
            <person name="Sessa L."/>
            <person name="Sheng Y."/>
            <person name="Shibata Y."/>
            <person name="Shimada H."/>
            <person name="Shimada K."/>
            <person name="Silva D."/>
            <person name="Sinclair B."/>
            <person name="Sperling S."/>
            <person name="Stupka E."/>
            <person name="Sugiura K."/>
            <person name="Sultana R."/>
            <person name="Takenaka Y."/>
            <person name="Taki K."/>
            <person name="Tammoja K."/>
            <person name="Tan S.L."/>
            <person name="Tang S."/>
            <person name="Taylor M.S."/>
            <person name="Tegner J."/>
            <person name="Teichmann S.A."/>
            <person name="Ueda H.R."/>
            <person name="van Nimwegen E."/>
            <person name="Verardo R."/>
            <person name="Wei C.L."/>
            <person name="Yagi K."/>
            <person name="Yamanishi H."/>
            <person name="Zabarovsky E."/>
            <person name="Zhu S."/>
            <person name="Zimmer A."/>
            <person name="Hide W."/>
            <person name="Bult C."/>
            <person name="Grimmond S.M."/>
            <person name="Teasdale R.D."/>
            <person name="Liu E.T."/>
            <person name="Brusic V."/>
            <person name="Quackenbush J."/>
            <person name="Wahlestedt C."/>
            <person name="Mattick J.S."/>
            <person name="Hume D.A."/>
            <person name="Kai C."/>
            <person name="Sasaki D."/>
            <person name="Tomaru Y."/>
            <person name="Fukuda S."/>
            <person name="Kanamori-Katayama M."/>
            <person name="Suzuki M."/>
            <person name="Aoki J."/>
            <person name="Arakawa T."/>
            <person name="Iida J."/>
            <person name="Imamura K."/>
            <person name="Itoh M."/>
            <person name="Kato T."/>
            <person name="Kawaji H."/>
            <person name="Kawagashira N."/>
            <person name="Kawashima T."/>
            <person name="Kojima M."/>
            <person name="Kondo S."/>
            <person name="Konno H."/>
            <person name="Nakano K."/>
            <person name="Ninomiya N."/>
            <person name="Nishio T."/>
            <person name="Okada M."/>
            <person name="Plessy C."/>
            <person name="Shibata K."/>
            <person name="Shiraki T."/>
            <person name="Suzuki S."/>
            <person name="Tagami M."/>
            <person name="Waki K."/>
            <person name="Watahiki A."/>
            <person name="Okamura-Oho Y."/>
            <person name="Suzuki H."/>
            <person name="Kawai J."/>
            <person name="Hayashizaki Y."/>
        </authorList>
    </citation>
    <scope>NUCLEOTIDE SEQUENCE [LARGE SCALE MRNA] (ISOFORM LONG)</scope>
    <source>
        <strain>C57BL/6J</strain>
    </source>
</reference>
<reference key="4">
    <citation type="submission" date="2005-07" db="EMBL/GenBank/DDBJ databases">
        <authorList>
            <person name="Mural R.J."/>
            <person name="Adams M.D."/>
            <person name="Myers E.W."/>
            <person name="Smith H.O."/>
            <person name="Venter J.C."/>
        </authorList>
    </citation>
    <scope>NUCLEOTIDE SEQUENCE [LARGE SCALE GENOMIC DNA]</scope>
</reference>
<reference key="5">
    <citation type="journal article" date="2004" name="Genome Res.">
        <title>The status, quality, and expansion of the NIH full-length cDNA project: the Mammalian Gene Collection (MGC).</title>
        <authorList>
            <consortium name="The MGC Project Team"/>
        </authorList>
    </citation>
    <scope>NUCLEOTIDE SEQUENCE [LARGE SCALE MRNA] (ISOFORM LONG)</scope>
    <source>
        <tissue>Limb</tissue>
    </source>
</reference>
<reference key="6">
    <citation type="journal article" date="1996" name="Oncogene">
        <title>A juxtamembrane autophosphorylation site in the Eph family receptor tyrosine kinase, Sek, mediates high affinity interaction with p59fyn.</title>
        <authorList>
            <person name="Ellis C."/>
            <person name="Kasmi F."/>
            <person name="Ganju P."/>
            <person name="Walls E."/>
            <person name="Panayotou G."/>
            <person name="Reith A.D."/>
        </authorList>
    </citation>
    <scope>PHOSPHORYLATION AT TYR-596 AND TYR-602</scope>
    <scope>INTERACTION WITH FYN</scope>
</reference>
<reference key="7">
    <citation type="journal article" date="1998" name="Proc. Natl. Acad. Sci. U.S.A.">
        <title>EphA4 (Sek1) receptor tyrosine kinase is required for the development of the corticospinal tract.</title>
        <authorList>
            <person name="Dottori M."/>
            <person name="Hartley L."/>
            <person name="Galea M."/>
            <person name="Paxinos G."/>
            <person name="Polizzotto M."/>
            <person name="Kilpatrick T."/>
            <person name="Bartlett P.F."/>
            <person name="Murphy M."/>
            <person name="Koentgen F."/>
            <person name="Boyd A.W."/>
        </authorList>
    </citation>
    <scope>DISRUPTION PHENOTYPE</scope>
    <scope>FUNCTION IN AXON GUIDANCE</scope>
</reference>
<reference key="8">
    <citation type="journal article" date="2001" name="Cell">
        <title>EphA receptors regulate growth cone dynamics through the novel guanine nucleotide exchange factor ephexin.</title>
        <authorList>
            <person name="Shamah S.M."/>
            <person name="Lin M.Z."/>
            <person name="Goldberg J.L."/>
            <person name="Estrach S."/>
            <person name="Sahin M."/>
            <person name="Hu L."/>
            <person name="Bazalakova M."/>
            <person name="Neve R.L."/>
            <person name="Corfas G."/>
            <person name="Debant A."/>
            <person name="Greenberg M.E."/>
        </authorList>
    </citation>
    <scope>INTERACTION WITH NGEF</scope>
    <scope>MUTAGENESIS OF VAL-635</scope>
</reference>
<reference key="9">
    <citation type="journal article" date="2002" name="Mech. Dev.">
        <title>Developmental expression of EphA4-tyrosine kinase receptor in the mouse brain and spinal cord.</title>
        <authorList>
            <person name="Greferath U."/>
            <person name="Canty A.J."/>
            <person name="Messenger J."/>
            <person name="Murphy M."/>
        </authorList>
    </citation>
    <scope>DEVELOPMENTAL STAGE</scope>
</reference>
<reference key="10">
    <citation type="journal article" date="2004" name="J. Neurosci.">
        <title>Axonal regeneration and lack of astrocytic gliosis in EphA4-deficient mice.</title>
        <authorList>
            <person name="Goldshmit Y."/>
            <person name="Galea M.P."/>
            <person name="Wise G."/>
            <person name="Bartlett P.F."/>
            <person name="Turnley A.M."/>
        </authorList>
    </citation>
    <scope>DISRUPTION PHENOTYPE</scope>
    <scope>FUNCTION IN AXONAL REGENERATION</scope>
</reference>
<reference key="11">
    <citation type="journal article" date="2006" name="J. Comp. Neurol.">
        <title>EphA4 regulates central nervous system vascular formation.</title>
        <authorList>
            <person name="Goldshmit Y."/>
            <person name="Galea M.P."/>
            <person name="Bartlett P.F."/>
            <person name="Turnley A.M."/>
        </authorList>
    </citation>
    <scope>FUNCTION IN ANGIOGENESIS</scope>
</reference>
<reference key="12">
    <citation type="journal article" date="2006" name="J. Immunol.">
        <title>Thymic alterations in EphA4-deficient mice.</title>
        <authorList>
            <person name="Munoz J.J."/>
            <person name="Alfaro D."/>
            <person name="Garcia-Ceca J."/>
            <person name="Alonso-C L.M."/>
            <person name="Jimenez E."/>
            <person name="Zapata A."/>
        </authorList>
    </citation>
    <scope>DISRUPTION PHENOTYPE</scope>
    <scope>FUNCTION IN THYMUS DEVELOPMENT</scope>
</reference>
<reference key="13">
    <citation type="journal article" date="2007" name="Cell">
        <title>Rac-GAP alpha-chimerin regulates motor-circuit formation as a key mediator of EphrinB3/EphA4 forward signaling.</title>
        <authorList>
            <person name="Iwasato T."/>
            <person name="Katoh H."/>
            <person name="Nishimaru H."/>
            <person name="Ishikawa Y."/>
            <person name="Inoue H."/>
            <person name="Saito Y.M."/>
            <person name="Ando R."/>
            <person name="Iwama M."/>
            <person name="Takahashi R."/>
            <person name="Negishi M."/>
            <person name="Itohara S."/>
        </authorList>
    </citation>
    <scope>FUNCTION IN RAC1 REGULATION</scope>
    <scope>FUNCTION IN AXON GUIDANCE</scope>
    <scope>INTERACTION WITH CHN1</scope>
</reference>
<reference key="14">
    <citation type="journal article" date="2007" name="J. Neurosci.">
        <title>The EphA4 receptor regulates neuronal morphology through SPAR-mediated inactivation of Rap GTPases.</title>
        <authorList>
            <person name="Richter M."/>
            <person name="Murai K.K."/>
            <person name="Bourgin C."/>
            <person name="Pak D.T."/>
            <person name="Pasquale E.B."/>
        </authorList>
    </citation>
    <scope>FUNCTION IN NEURON MORPHOLOGY</scope>
    <scope>INTERACTION WITH SIPA1L1</scope>
</reference>
<reference key="15">
    <citation type="journal article" date="2007" name="Nat. Neurosci.">
        <title>Cdk5 regulates EphA4-mediated dendritic spine retraction through an ephexin1-dependent mechanism.</title>
        <authorList>
            <person name="Fu W.Y."/>
            <person name="Chen Y."/>
            <person name="Sahin M."/>
            <person name="Zhao X.S."/>
            <person name="Shi L."/>
            <person name="Bikoff J.B."/>
            <person name="Lai K.O."/>
            <person name="Yung W.H."/>
            <person name="Fu A.K."/>
            <person name="Greenberg M.E."/>
            <person name="Ip N.Y."/>
        </authorList>
    </citation>
    <scope>FUNCTION IN DENDRITIC SPINE MORPHOGENESIS</scope>
    <scope>TOPOLOGY</scope>
    <scope>SUBCELLULAR LOCATION</scope>
    <scope>INTERACTION WITH NGEF</scope>
</reference>
<reference key="16">
    <citation type="journal article" date="2007" name="Neuron">
        <title>alpha2-Chimaerin is an essential EphA4 effector in the assembly of neuronal locomotor circuits.</title>
        <authorList>
            <person name="Beg A.A."/>
            <person name="Sommer J.E."/>
            <person name="Martin J.H."/>
            <person name="Scheiffele P."/>
        </authorList>
    </citation>
    <scope>FUNCTION IN AXON GUIDANCE</scope>
    <scope>INTERACTION WITH CHN1</scope>
    <scope>MUTAGENESIS OF VAL-635</scope>
</reference>
<reference key="17">
    <citation type="journal article" date="2008" name="J. Proteome Res.">
        <title>Large-scale identification and evolution indexing of tyrosine phosphorylation sites from murine brain.</title>
        <authorList>
            <person name="Ballif B.A."/>
            <person name="Carey G.R."/>
            <person name="Sunyaev S.R."/>
            <person name="Gygi S.P."/>
        </authorList>
    </citation>
    <scope>PHOSPHORYLATION [LARGE SCALE ANALYSIS] AT TYR-602</scope>
    <scope>IDENTIFICATION BY MASS SPECTROMETRY [LARGE SCALE ANALYSIS]</scope>
    <source>
        <tissue>Brain</tissue>
    </source>
</reference>
<reference key="18">
    <citation type="journal article" date="2008" name="Science">
        <title>Segregation of axial motor and sensory pathways via heterotypic trans-axonal signaling.</title>
        <authorList>
            <person name="Gallarda B.W."/>
            <person name="Bonanomi D."/>
            <person name="Mueller D."/>
            <person name="Brown A."/>
            <person name="Alaynick W.A."/>
            <person name="Andrews S.E."/>
            <person name="Lemke G."/>
            <person name="Pfaff S.L."/>
            <person name="Marquardt T."/>
        </authorList>
    </citation>
    <scope>FUNCTION IN MOTOR AND SENSORY AXONS SEGREGATION</scope>
</reference>
<reference key="19">
    <citation type="journal article" date="2010" name="Cell">
        <title>A tissue-specific atlas of mouse protein phosphorylation and expression.</title>
        <authorList>
            <person name="Huttlin E.L."/>
            <person name="Jedrychowski M.P."/>
            <person name="Elias J.E."/>
            <person name="Goswami T."/>
            <person name="Rad R."/>
            <person name="Beausoleil S.A."/>
            <person name="Villen J."/>
            <person name="Haas W."/>
            <person name="Sowa M.E."/>
            <person name="Gygi S.P."/>
        </authorList>
    </citation>
    <scope>IDENTIFICATION BY MASS SPECTROMETRY [LARGE SCALE ANALYSIS]</scope>
    <source>
        <tissue>Brain</tissue>
        <tissue>Heart</tissue>
    </source>
</reference>
<reference key="20">
    <citation type="journal article" date="2016" name="Front. Cell Dev. Biol.">
        <title>Gene expression profiling of muscle stem cells identifies novel regulators of postnatal myogenesis.</title>
        <authorList>
            <person name="Alonso-Martin S."/>
            <person name="Rochat A."/>
            <person name="Mademtzoglou D."/>
            <person name="Morais J."/>
            <person name="de Reynies A."/>
            <person name="Aurade F."/>
            <person name="Chang T.H."/>
            <person name="Zammit P.S."/>
            <person name="Relaix F."/>
        </authorList>
    </citation>
    <scope>DEVELOPMENTAL STAGE</scope>
    <scope>TISSUE SPECIFICITY</scope>
</reference>
<reference key="21">
    <citation type="journal article" date="2019" name="IScience">
        <title>EphA4-ADAM10 Interplay Patterns the Cochlear Sensory Epithelium through Local Disruption of Adherens Junctions.</title>
        <authorList>
            <person name="Defourny J."/>
            <person name="Peuckert C."/>
            <person name="Kullander K."/>
            <person name="Malgrange B."/>
        </authorList>
    </citation>
    <scope>FUNCTION</scope>
    <scope>IDENTIFICATION IN COMPLEX WITH ADAM10 AND CADH1</scope>
    <scope>SUBCELLULAR LOCATION</scope>
    <scope>TISSUE SPECIFICITY</scope>
</reference>
<reference key="22">
    <citation type="journal article" date="2019" name="Science">
        <title>Phospho-dependent phase separation of FMRP and CAPRIN1 recapitulates regulation of translation and deadenylation.</title>
        <authorList>
            <person name="Kim T.H."/>
            <person name="Tsang B."/>
            <person name="Vernon R.M."/>
            <person name="Sonenberg N."/>
            <person name="Kay L.E."/>
            <person name="Forman-Kay J.D."/>
        </authorList>
    </citation>
    <scope>FUNCTION</scope>
    <scope>CATALYTIC ACTIVITY</scope>
</reference>
<name>EPHA4_MOUSE</name>
<feature type="signal peptide" evidence="2">
    <location>
        <begin position="1"/>
        <end position="19"/>
    </location>
</feature>
<feature type="chain" id="PRO_0000016808" description="Ephrin type-A receptor 4">
    <location>
        <begin position="20"/>
        <end position="986"/>
    </location>
</feature>
<feature type="topological domain" description="Extracellular" evidence="2">
    <location>
        <begin position="20"/>
        <end position="547"/>
    </location>
</feature>
<feature type="transmembrane region" description="Helical" evidence="2">
    <location>
        <begin position="548"/>
        <end position="569"/>
    </location>
</feature>
<feature type="topological domain" description="Cytoplasmic" evidence="2">
    <location>
        <begin position="570"/>
        <end position="986"/>
    </location>
</feature>
<feature type="domain" description="Eph LBD" evidence="6">
    <location>
        <begin position="30"/>
        <end position="209"/>
    </location>
</feature>
<feature type="domain" description="Fibronectin type-III 1" evidence="5">
    <location>
        <begin position="328"/>
        <end position="439"/>
    </location>
</feature>
<feature type="domain" description="Fibronectin type-III 2" evidence="5">
    <location>
        <begin position="440"/>
        <end position="537"/>
    </location>
</feature>
<feature type="domain" description="Protein kinase" evidence="3">
    <location>
        <begin position="621"/>
        <end position="882"/>
    </location>
</feature>
<feature type="domain" description="SAM" evidence="4">
    <location>
        <begin position="911"/>
        <end position="975"/>
    </location>
</feature>
<feature type="short sequence motif" description="PDZ-binding" evidence="2">
    <location>
        <begin position="984"/>
        <end position="986"/>
    </location>
</feature>
<feature type="active site" description="Proton acceptor" evidence="3 7">
    <location>
        <position position="746"/>
    </location>
</feature>
<feature type="binding site" evidence="3">
    <location>
        <begin position="627"/>
        <end position="635"/>
    </location>
    <ligand>
        <name>ATP</name>
        <dbReference type="ChEBI" id="CHEBI:30616"/>
    </ligand>
</feature>
<feature type="binding site" evidence="3">
    <location>
        <position position="653"/>
    </location>
    <ligand>
        <name>ATP</name>
        <dbReference type="ChEBI" id="CHEBI:30616"/>
    </ligand>
</feature>
<feature type="modified residue" description="Phosphotyrosine; by autocatalysis" evidence="21">
    <location>
        <position position="596"/>
    </location>
</feature>
<feature type="modified residue" description="Phosphotyrosine; by autocatalysis" evidence="21 24">
    <location>
        <position position="602"/>
    </location>
</feature>
<feature type="modified residue" description="Phosphotyrosine; by autocatalysis" evidence="2">
    <location>
        <position position="779"/>
    </location>
</feature>
<feature type="modified residue" description="Phosphotyrosine; by autocatalysis" evidence="2">
    <location>
        <position position="928"/>
    </location>
</feature>
<feature type="glycosylation site" description="N-linked (GlcNAc...) asparagine" evidence="2">
    <location>
        <position position="235"/>
    </location>
</feature>
<feature type="glycosylation site" description="N-linked (GlcNAc...) asparagine" evidence="2">
    <location>
        <position position="340"/>
    </location>
</feature>
<feature type="glycosylation site" description="N-linked (GlcNAc...) asparagine" evidence="2">
    <location>
        <position position="408"/>
    </location>
</feature>
<feature type="splice variant" id="VSP_002998" description="In isoform Short." evidence="23">
    <location>
        <begin position="783"/>
        <end position="832"/>
    </location>
</feature>
<feature type="mutagenesis site" description="Kinase dead; loss of autophosphorylation and loss of CHN1 phosphorylation. No effect on interaction with NGEF." evidence="8 15">
    <original>V</original>
    <variation>M</variation>
    <location>
        <position position="635"/>
    </location>
</feature>
<feature type="sequence conflict" description="In Ref. 1; CAA46268/AAB25836." evidence="23" ref="1">
    <original>I</original>
    <variation>T</variation>
    <location>
        <position position="145"/>
    </location>
</feature>
<feature type="helix" evidence="26">
    <location>
        <begin position="618"/>
        <end position="620"/>
    </location>
</feature>
<feature type="strand" evidence="26">
    <location>
        <begin position="621"/>
        <end position="629"/>
    </location>
</feature>
<feature type="strand" evidence="26">
    <location>
        <begin position="631"/>
        <end position="640"/>
    </location>
</feature>
<feature type="strand" evidence="26">
    <location>
        <begin position="648"/>
        <end position="655"/>
    </location>
</feature>
<feature type="helix" evidence="26">
    <location>
        <begin position="661"/>
        <end position="674"/>
    </location>
</feature>
<feature type="strand" evidence="26">
    <location>
        <begin position="685"/>
        <end position="689"/>
    </location>
</feature>
<feature type="strand" evidence="26">
    <location>
        <begin position="691"/>
        <end position="694"/>
    </location>
</feature>
<feature type="strand" evidence="26">
    <location>
        <begin position="696"/>
        <end position="700"/>
    </location>
</feature>
<feature type="helix" evidence="26">
    <location>
        <begin position="707"/>
        <end position="712"/>
    </location>
</feature>
<feature type="turn" evidence="26">
    <location>
        <begin position="713"/>
        <end position="716"/>
    </location>
</feature>
<feature type="helix" evidence="26">
    <location>
        <begin position="720"/>
        <end position="739"/>
    </location>
</feature>
<feature type="helix" evidence="26">
    <location>
        <begin position="749"/>
        <end position="751"/>
    </location>
</feature>
<feature type="strand" evidence="26">
    <location>
        <begin position="752"/>
        <end position="754"/>
    </location>
</feature>
<feature type="strand" evidence="26">
    <location>
        <begin position="760"/>
        <end position="762"/>
    </location>
</feature>
<feature type="helix" evidence="26">
    <location>
        <begin position="788"/>
        <end position="790"/>
    </location>
</feature>
<feature type="helix" evidence="26">
    <location>
        <begin position="793"/>
        <end position="798"/>
    </location>
</feature>
<feature type="helix" evidence="26">
    <location>
        <begin position="803"/>
        <end position="818"/>
    </location>
</feature>
<feature type="turn" evidence="26">
    <location>
        <begin position="824"/>
        <end position="827"/>
    </location>
</feature>
<feature type="helix" evidence="26">
    <location>
        <begin position="830"/>
        <end position="838"/>
    </location>
</feature>
<feature type="helix" evidence="26">
    <location>
        <begin position="851"/>
        <end position="860"/>
    </location>
</feature>
<feature type="helix" evidence="26">
    <location>
        <begin position="865"/>
        <end position="867"/>
    </location>
</feature>
<feature type="helix" evidence="26">
    <location>
        <begin position="871"/>
        <end position="883"/>
    </location>
</feature>
<feature type="helix" evidence="26">
    <location>
        <begin position="885"/>
        <end position="888"/>
    </location>
</feature>
<feature type="helix" evidence="25">
    <location>
        <begin position="916"/>
        <end position="922"/>
    </location>
</feature>
<feature type="helix" evidence="25">
    <location>
        <begin position="926"/>
        <end position="928"/>
    </location>
</feature>
<feature type="helix" evidence="25">
    <location>
        <begin position="929"/>
        <end position="934"/>
    </location>
</feature>
<feature type="helix" evidence="25">
    <location>
        <begin position="940"/>
        <end position="943"/>
    </location>
</feature>
<feature type="helix" evidence="25">
    <location>
        <begin position="948"/>
        <end position="954"/>
    </location>
</feature>
<feature type="helix" evidence="25">
    <location>
        <begin position="959"/>
        <end position="977"/>
    </location>
</feature>
<feature type="helix" evidence="25">
    <location>
        <begin position="978"/>
        <end position="980"/>
    </location>
</feature>
<organism>
    <name type="scientific">Mus musculus</name>
    <name type="common">Mouse</name>
    <dbReference type="NCBI Taxonomy" id="10090"/>
    <lineage>
        <taxon>Eukaryota</taxon>
        <taxon>Metazoa</taxon>
        <taxon>Chordata</taxon>
        <taxon>Craniata</taxon>
        <taxon>Vertebrata</taxon>
        <taxon>Euteleostomi</taxon>
        <taxon>Mammalia</taxon>
        <taxon>Eutheria</taxon>
        <taxon>Euarchontoglires</taxon>
        <taxon>Glires</taxon>
        <taxon>Rodentia</taxon>
        <taxon>Myomorpha</taxon>
        <taxon>Muroidea</taxon>
        <taxon>Muridae</taxon>
        <taxon>Murinae</taxon>
        <taxon>Mus</taxon>
        <taxon>Mus</taxon>
    </lineage>
</organism>
<protein>
    <recommendedName>
        <fullName>Ephrin type-A receptor 4</fullName>
        <ecNumber evidence="20">2.7.10.1</ecNumber>
    </recommendedName>
    <alternativeName>
        <fullName>Tyrosine-protein kinase receptor MPK-3</fullName>
    </alternativeName>
    <alternativeName>
        <fullName>Tyrosine-protein kinase receptor SEK-1</fullName>
    </alternativeName>
</protein>
<accession>Q03137</accession>
<accession>Q80VZ2</accession>
<gene>
    <name type="primary">Epha4</name>
    <name type="synonym">Sek</name>
    <name type="synonym">Sek1</name>
</gene>
<keyword id="KW-0002">3D-structure</keyword>
<keyword id="KW-0025">Alternative splicing</keyword>
<keyword id="KW-0067">ATP-binding</keyword>
<keyword id="KW-0130">Cell adhesion</keyword>
<keyword id="KW-0965">Cell junction</keyword>
<keyword id="KW-1003">Cell membrane</keyword>
<keyword id="KW-0966">Cell projection</keyword>
<keyword id="KW-0217">Developmental protein</keyword>
<keyword id="KW-0967">Endosome</keyword>
<keyword id="KW-0325">Glycoprotein</keyword>
<keyword id="KW-0418">Kinase</keyword>
<keyword id="KW-0472">Membrane</keyword>
<keyword id="KW-0524">Neurogenesis</keyword>
<keyword id="KW-0547">Nucleotide-binding</keyword>
<keyword id="KW-0597">Phosphoprotein</keyword>
<keyword id="KW-0628">Postsynaptic cell membrane</keyword>
<keyword id="KW-0675">Receptor</keyword>
<keyword id="KW-1185">Reference proteome</keyword>
<keyword id="KW-0677">Repeat</keyword>
<keyword id="KW-0732">Signal</keyword>
<keyword id="KW-0770">Synapse</keyword>
<keyword id="KW-0808">Transferase</keyword>
<keyword id="KW-0812">Transmembrane</keyword>
<keyword id="KW-1133">Transmembrane helix</keyword>
<keyword id="KW-0829">Tyrosine-protein kinase</keyword>
<evidence type="ECO:0000250" key="1"/>
<evidence type="ECO:0000255" key="2"/>
<evidence type="ECO:0000255" key="3">
    <source>
        <dbReference type="PROSITE-ProRule" id="PRU00159"/>
    </source>
</evidence>
<evidence type="ECO:0000255" key="4">
    <source>
        <dbReference type="PROSITE-ProRule" id="PRU00184"/>
    </source>
</evidence>
<evidence type="ECO:0000255" key="5">
    <source>
        <dbReference type="PROSITE-ProRule" id="PRU00316"/>
    </source>
</evidence>
<evidence type="ECO:0000255" key="6">
    <source>
        <dbReference type="PROSITE-ProRule" id="PRU00883"/>
    </source>
</evidence>
<evidence type="ECO:0000255" key="7">
    <source>
        <dbReference type="PROSITE-ProRule" id="PRU10028"/>
    </source>
</evidence>
<evidence type="ECO:0000269" key="8">
    <source>
    </source>
</evidence>
<evidence type="ECO:0000269" key="9">
    <source>
    </source>
</evidence>
<evidence type="ECO:0000269" key="10">
    <source>
    </source>
</evidence>
<evidence type="ECO:0000269" key="11">
    <source>
    </source>
</evidence>
<evidence type="ECO:0000269" key="12">
    <source>
    </source>
</evidence>
<evidence type="ECO:0000269" key="13">
    <source>
    </source>
</evidence>
<evidence type="ECO:0000269" key="14">
    <source>
    </source>
</evidence>
<evidence type="ECO:0000269" key="15">
    <source>
    </source>
</evidence>
<evidence type="ECO:0000269" key="16">
    <source>
    </source>
</evidence>
<evidence type="ECO:0000269" key="17">
    <source>
    </source>
</evidence>
<evidence type="ECO:0000269" key="18">
    <source>
    </source>
</evidence>
<evidence type="ECO:0000269" key="19">
    <source>
    </source>
</evidence>
<evidence type="ECO:0000269" key="20">
    <source>
    </source>
</evidence>
<evidence type="ECO:0000269" key="21">
    <source>
    </source>
</evidence>
<evidence type="ECO:0000269" key="22">
    <source>
    </source>
</evidence>
<evidence type="ECO:0000305" key="23"/>
<evidence type="ECO:0007744" key="24">
    <source>
    </source>
</evidence>
<evidence type="ECO:0007829" key="25">
    <source>
        <dbReference type="PDB" id="1B0X"/>
    </source>
</evidence>
<evidence type="ECO:0007829" key="26">
    <source>
        <dbReference type="PDB" id="2Y6O"/>
    </source>
</evidence>